<reference key="1">
    <citation type="submission" date="2006-09" db="EMBL/GenBank/DDBJ databases">
        <title>Complete sequence of Rhodopseudomonas palustris BisA53.</title>
        <authorList>
            <consortium name="US DOE Joint Genome Institute"/>
            <person name="Copeland A."/>
            <person name="Lucas S."/>
            <person name="Lapidus A."/>
            <person name="Barry K."/>
            <person name="Detter J.C."/>
            <person name="Glavina del Rio T."/>
            <person name="Hammon N."/>
            <person name="Israni S."/>
            <person name="Dalin E."/>
            <person name="Tice H."/>
            <person name="Pitluck S."/>
            <person name="Chain P."/>
            <person name="Malfatti S."/>
            <person name="Shin M."/>
            <person name="Vergez L."/>
            <person name="Schmutz J."/>
            <person name="Larimer F."/>
            <person name="Land M."/>
            <person name="Hauser L."/>
            <person name="Pelletier D.A."/>
            <person name="Kyrpides N."/>
            <person name="Kim E."/>
            <person name="Harwood C.S."/>
            <person name="Oda Y."/>
            <person name="Richardson P."/>
        </authorList>
    </citation>
    <scope>NUCLEOTIDE SEQUENCE [LARGE SCALE GENOMIC DNA]</scope>
    <source>
        <strain>BisA53</strain>
    </source>
</reference>
<dbReference type="EC" id="4.2.1.96" evidence="1"/>
<dbReference type="EMBL" id="CP000463">
    <property type="protein sequence ID" value="ABJ06645.1"/>
    <property type="molecule type" value="Genomic_DNA"/>
</dbReference>
<dbReference type="SMR" id="Q07N39"/>
<dbReference type="STRING" id="316055.RPE_2708"/>
<dbReference type="KEGG" id="rpe:RPE_2708"/>
<dbReference type="eggNOG" id="COG2154">
    <property type="taxonomic scope" value="Bacteria"/>
</dbReference>
<dbReference type="HOGENOM" id="CLU_081974_3_2_5"/>
<dbReference type="OrthoDB" id="9794987at2"/>
<dbReference type="GO" id="GO:0008124">
    <property type="term" value="F:4-alpha-hydroxytetrahydrobiopterin dehydratase activity"/>
    <property type="evidence" value="ECO:0007669"/>
    <property type="project" value="UniProtKB-UniRule"/>
</dbReference>
<dbReference type="GO" id="GO:0006729">
    <property type="term" value="P:tetrahydrobiopterin biosynthetic process"/>
    <property type="evidence" value="ECO:0007669"/>
    <property type="project" value="InterPro"/>
</dbReference>
<dbReference type="CDD" id="cd00914">
    <property type="entry name" value="PCD_DCoH_subfamily_b"/>
    <property type="match status" value="1"/>
</dbReference>
<dbReference type="Gene3D" id="3.30.1360.20">
    <property type="entry name" value="Transcriptional coactivator/pterin dehydratase"/>
    <property type="match status" value="1"/>
</dbReference>
<dbReference type="HAMAP" id="MF_00434">
    <property type="entry name" value="Pterin_4_alpha"/>
    <property type="match status" value="1"/>
</dbReference>
<dbReference type="InterPro" id="IPR036428">
    <property type="entry name" value="PCD_sf"/>
</dbReference>
<dbReference type="InterPro" id="IPR001533">
    <property type="entry name" value="Pterin_deHydtase"/>
</dbReference>
<dbReference type="NCBIfam" id="NF002017">
    <property type="entry name" value="PRK00823.1-2"/>
    <property type="match status" value="1"/>
</dbReference>
<dbReference type="NCBIfam" id="NF002018">
    <property type="entry name" value="PRK00823.1-3"/>
    <property type="match status" value="1"/>
</dbReference>
<dbReference type="PANTHER" id="PTHR12599">
    <property type="entry name" value="PTERIN-4-ALPHA-CARBINOLAMINE DEHYDRATASE"/>
    <property type="match status" value="1"/>
</dbReference>
<dbReference type="PANTHER" id="PTHR12599:SF0">
    <property type="entry name" value="PTERIN-4-ALPHA-CARBINOLAMINE DEHYDRATASE"/>
    <property type="match status" value="1"/>
</dbReference>
<dbReference type="Pfam" id="PF01329">
    <property type="entry name" value="Pterin_4a"/>
    <property type="match status" value="1"/>
</dbReference>
<dbReference type="SUPFAM" id="SSF55248">
    <property type="entry name" value="PCD-like"/>
    <property type="match status" value="1"/>
</dbReference>
<accession>Q07N39</accession>
<gene>
    <name type="ordered locus">RPE_2708</name>
</gene>
<feature type="chain" id="PRO_1000050444" description="Putative pterin-4-alpha-carbinolamine dehydratase">
    <location>
        <begin position="1"/>
        <end position="101"/>
    </location>
</feature>
<proteinExistence type="inferred from homology"/>
<comment type="catalytic activity">
    <reaction evidence="1">
        <text>(4aS,6R)-4a-hydroxy-L-erythro-5,6,7,8-tetrahydrobiopterin = (6R)-L-erythro-6,7-dihydrobiopterin + H2O</text>
        <dbReference type="Rhea" id="RHEA:11920"/>
        <dbReference type="ChEBI" id="CHEBI:15377"/>
        <dbReference type="ChEBI" id="CHEBI:15642"/>
        <dbReference type="ChEBI" id="CHEBI:43120"/>
        <dbReference type="EC" id="4.2.1.96"/>
    </reaction>
</comment>
<comment type="similarity">
    <text evidence="1">Belongs to the pterin-4-alpha-carbinolamine dehydratase family.</text>
</comment>
<protein>
    <recommendedName>
        <fullName evidence="1">Putative pterin-4-alpha-carbinolamine dehydratase</fullName>
        <shortName evidence="1">PHS</shortName>
        <ecNumber evidence="1">4.2.1.96</ecNumber>
    </recommendedName>
    <alternativeName>
        <fullName evidence="1">4-alpha-hydroxy-tetrahydropterin dehydratase</fullName>
    </alternativeName>
    <alternativeName>
        <fullName evidence="1">Pterin carbinolamine dehydratase</fullName>
        <shortName evidence="1">PCD</shortName>
    </alternativeName>
</protein>
<evidence type="ECO:0000255" key="1">
    <source>
        <dbReference type="HAMAP-Rule" id="MF_00434"/>
    </source>
</evidence>
<organism>
    <name type="scientific">Rhodopseudomonas palustris (strain BisA53)</name>
    <dbReference type="NCBI Taxonomy" id="316055"/>
    <lineage>
        <taxon>Bacteria</taxon>
        <taxon>Pseudomonadati</taxon>
        <taxon>Pseudomonadota</taxon>
        <taxon>Alphaproteobacteria</taxon>
        <taxon>Hyphomicrobiales</taxon>
        <taxon>Nitrobacteraceae</taxon>
        <taxon>Rhodopseudomonas</taxon>
    </lineage>
</organism>
<name>PHS_RHOP5</name>
<sequence>MVERLSEAARRAALDALPDWSELPDREAITRTLKFKDFGQAFGFMAQVALVAEKHDHHPEWRNVYNTVEVTLTTHDAGGVTARDVDLARAIDAIAAPLSPR</sequence>
<keyword id="KW-0456">Lyase</keyword>